<dbReference type="EMBL" id="CP000524">
    <property type="protein sequence ID" value="ABM44419.1"/>
    <property type="molecule type" value="Genomic_DNA"/>
</dbReference>
<dbReference type="EMBL" id="CP000524">
    <property type="protein sequence ID" value="ABM45093.1"/>
    <property type="molecule type" value="Genomic_DNA"/>
</dbReference>
<dbReference type="SMR" id="A1USK9"/>
<dbReference type="STRING" id="360095.BARBAKC583_0661"/>
<dbReference type="GeneID" id="4685099"/>
<dbReference type="KEGG" id="bbk:BARBAKC583_0661"/>
<dbReference type="KEGG" id="bbk:BARBAKC583_0693"/>
<dbReference type="eggNOG" id="COG0048">
    <property type="taxonomic scope" value="Bacteria"/>
</dbReference>
<dbReference type="HOGENOM" id="CLU_104295_1_2_5"/>
<dbReference type="OrthoDB" id="9802366at2"/>
<dbReference type="Proteomes" id="UP000000643">
    <property type="component" value="Chromosome"/>
</dbReference>
<dbReference type="GO" id="GO:0015935">
    <property type="term" value="C:small ribosomal subunit"/>
    <property type="evidence" value="ECO:0007669"/>
    <property type="project" value="InterPro"/>
</dbReference>
<dbReference type="GO" id="GO:0019843">
    <property type="term" value="F:rRNA binding"/>
    <property type="evidence" value="ECO:0007669"/>
    <property type="project" value="UniProtKB-UniRule"/>
</dbReference>
<dbReference type="GO" id="GO:0003735">
    <property type="term" value="F:structural constituent of ribosome"/>
    <property type="evidence" value="ECO:0007669"/>
    <property type="project" value="InterPro"/>
</dbReference>
<dbReference type="GO" id="GO:0000049">
    <property type="term" value="F:tRNA binding"/>
    <property type="evidence" value="ECO:0007669"/>
    <property type="project" value="UniProtKB-UniRule"/>
</dbReference>
<dbReference type="GO" id="GO:0006412">
    <property type="term" value="P:translation"/>
    <property type="evidence" value="ECO:0007669"/>
    <property type="project" value="UniProtKB-UniRule"/>
</dbReference>
<dbReference type="CDD" id="cd03368">
    <property type="entry name" value="Ribosomal_S12"/>
    <property type="match status" value="1"/>
</dbReference>
<dbReference type="FunFam" id="2.40.50.140:FF:000001">
    <property type="entry name" value="30S ribosomal protein S12"/>
    <property type="match status" value="1"/>
</dbReference>
<dbReference type="Gene3D" id="2.40.50.140">
    <property type="entry name" value="Nucleic acid-binding proteins"/>
    <property type="match status" value="1"/>
</dbReference>
<dbReference type="HAMAP" id="MF_00403_B">
    <property type="entry name" value="Ribosomal_uS12_B"/>
    <property type="match status" value="1"/>
</dbReference>
<dbReference type="InterPro" id="IPR012340">
    <property type="entry name" value="NA-bd_OB-fold"/>
</dbReference>
<dbReference type="InterPro" id="IPR006032">
    <property type="entry name" value="Ribosomal_uS12"/>
</dbReference>
<dbReference type="InterPro" id="IPR005679">
    <property type="entry name" value="Ribosomal_uS12_bac"/>
</dbReference>
<dbReference type="NCBIfam" id="TIGR00981">
    <property type="entry name" value="rpsL_bact"/>
    <property type="match status" value="1"/>
</dbReference>
<dbReference type="PANTHER" id="PTHR11652">
    <property type="entry name" value="30S RIBOSOMAL PROTEIN S12 FAMILY MEMBER"/>
    <property type="match status" value="1"/>
</dbReference>
<dbReference type="Pfam" id="PF00164">
    <property type="entry name" value="Ribosom_S12_S23"/>
    <property type="match status" value="1"/>
</dbReference>
<dbReference type="PIRSF" id="PIRSF002133">
    <property type="entry name" value="Ribosomal_S12/S23"/>
    <property type="match status" value="1"/>
</dbReference>
<dbReference type="PRINTS" id="PR01034">
    <property type="entry name" value="RIBOSOMALS12"/>
</dbReference>
<dbReference type="SUPFAM" id="SSF50249">
    <property type="entry name" value="Nucleic acid-binding proteins"/>
    <property type="match status" value="1"/>
</dbReference>
<dbReference type="PROSITE" id="PS00055">
    <property type="entry name" value="RIBOSOMAL_S12"/>
    <property type="match status" value="1"/>
</dbReference>
<gene>
    <name evidence="2" type="primary">rpsL1</name>
    <name type="ordered locus">BARBAKC583_0661</name>
</gene>
<gene>
    <name evidence="2" type="primary">rpsL2</name>
    <name type="ordered locus">BARBAKC583_0693</name>
</gene>
<accession>A1USK9</accession>
<proteinExistence type="inferred from homology"/>
<evidence type="ECO:0000250" key="1"/>
<evidence type="ECO:0000255" key="2">
    <source>
        <dbReference type="HAMAP-Rule" id="MF_00403"/>
    </source>
</evidence>
<evidence type="ECO:0000305" key="3"/>
<feature type="chain" id="PRO_0000295955" description="Small ribosomal subunit protein uS12">
    <location>
        <begin position="1"/>
        <end position="123"/>
    </location>
</feature>
<feature type="modified residue" description="3-methylthioaspartic acid" evidence="1">
    <location>
        <position position="89"/>
    </location>
</feature>
<name>RS12_BARBK</name>
<keyword id="KW-0488">Methylation</keyword>
<keyword id="KW-0687">Ribonucleoprotein</keyword>
<keyword id="KW-0689">Ribosomal protein</keyword>
<keyword id="KW-0694">RNA-binding</keyword>
<keyword id="KW-0699">rRNA-binding</keyword>
<keyword id="KW-0820">tRNA-binding</keyword>
<comment type="function">
    <text evidence="2">With S4 and S5 plays an important role in translational accuracy.</text>
</comment>
<comment type="function">
    <text evidence="2">Interacts with and stabilizes bases of the 16S rRNA that are involved in tRNA selection in the A site and with the mRNA backbone. Located at the interface of the 30S and 50S subunits, it traverses the body of the 30S subunit contacting proteins on the other side and probably holding the rRNA structure together. The combined cluster of proteins S8, S12 and S17 appears to hold together the shoulder and platform of the 30S subunit.</text>
</comment>
<comment type="subunit">
    <text evidence="2">Part of the 30S ribosomal subunit. Contacts proteins S8 and S17. May interact with IF1 in the 30S initiation complex.</text>
</comment>
<comment type="similarity">
    <text evidence="2">Belongs to the universal ribosomal protein uS12 family.</text>
</comment>
<sequence length="123" mass="13879">MPTVNQLIRKPRVVPVKRNKVPALQANPQKRGVCTRVYTTTPKKPNSALRKVAKVRLTNGFEVIGYIPGEGHNLQEHSVVVIRGGRVKDLPGVRYHIIRGLLDTQGVKNRKQRRSKYGAKRPK</sequence>
<reference key="1">
    <citation type="submission" date="2006-12" db="EMBL/GenBank/DDBJ databases">
        <authorList>
            <person name="Hendrix L."/>
            <person name="Mohamoud Y."/>
            <person name="Radune D."/>
            <person name="Shvartsbeyn A."/>
            <person name="Daugherty S."/>
            <person name="Dodson R."/>
            <person name="Durkin A.S."/>
            <person name="Harkins D."/>
            <person name="Huot H."/>
            <person name="Kothari S.P."/>
            <person name="Madupu R."/>
            <person name="Li J."/>
            <person name="Nelson W.C."/>
            <person name="Shrivastava S."/>
            <person name="Giglio M.G."/>
            <person name="Haft D."/>
            <person name="Selengut J."/>
            <person name="Fraser-Ligget C."/>
            <person name="Seshadri R."/>
        </authorList>
    </citation>
    <scope>NUCLEOTIDE SEQUENCE [LARGE SCALE GENOMIC DNA]</scope>
    <source>
        <strain>ATCC 35685 / KC583 / Herrer 020/F12,63</strain>
    </source>
</reference>
<organism>
    <name type="scientific">Bartonella bacilliformis (strain ATCC 35685 / KC583 / Herrer 020/F12,63)</name>
    <dbReference type="NCBI Taxonomy" id="360095"/>
    <lineage>
        <taxon>Bacteria</taxon>
        <taxon>Pseudomonadati</taxon>
        <taxon>Pseudomonadota</taxon>
        <taxon>Alphaproteobacteria</taxon>
        <taxon>Hyphomicrobiales</taxon>
        <taxon>Bartonellaceae</taxon>
        <taxon>Bartonella</taxon>
    </lineage>
</organism>
<protein>
    <recommendedName>
        <fullName evidence="2">Small ribosomal subunit protein uS12</fullName>
    </recommendedName>
    <alternativeName>
        <fullName evidence="3">30S ribosomal protein S12</fullName>
    </alternativeName>
</protein>